<evidence type="ECO:0000255" key="1">
    <source>
        <dbReference type="HAMAP-Rule" id="MF_01701"/>
    </source>
</evidence>
<protein>
    <recommendedName>
        <fullName evidence="1">Sulfate/thiosulfate import ATP-binding protein CysA</fullName>
        <ecNumber evidence="1">7.3.2.3</ecNumber>
    </recommendedName>
    <alternativeName>
        <fullName evidence="1">Sulfate-transporting ATPase</fullName>
    </alternativeName>
</protein>
<accession>Q6NBT1</accession>
<keyword id="KW-0067">ATP-binding</keyword>
<keyword id="KW-0997">Cell inner membrane</keyword>
<keyword id="KW-1003">Cell membrane</keyword>
<keyword id="KW-0472">Membrane</keyword>
<keyword id="KW-0547">Nucleotide-binding</keyword>
<keyword id="KW-0764">Sulfate transport</keyword>
<keyword id="KW-1278">Translocase</keyword>
<keyword id="KW-0813">Transport</keyword>
<organism>
    <name type="scientific">Rhodopseudomonas palustris (strain ATCC BAA-98 / CGA009)</name>
    <dbReference type="NCBI Taxonomy" id="258594"/>
    <lineage>
        <taxon>Bacteria</taxon>
        <taxon>Pseudomonadati</taxon>
        <taxon>Pseudomonadota</taxon>
        <taxon>Alphaproteobacteria</taxon>
        <taxon>Hyphomicrobiales</taxon>
        <taxon>Nitrobacteraceae</taxon>
        <taxon>Rhodopseudomonas</taxon>
    </lineage>
</organism>
<name>CYSA_RHOPA</name>
<feature type="chain" id="PRO_0000092289" description="Sulfate/thiosulfate import ATP-binding protein CysA">
    <location>
        <begin position="1"/>
        <end position="348"/>
    </location>
</feature>
<feature type="domain" description="ABC transporter" evidence="1">
    <location>
        <begin position="3"/>
        <end position="237"/>
    </location>
</feature>
<feature type="binding site" evidence="1">
    <location>
        <begin position="35"/>
        <end position="42"/>
    </location>
    <ligand>
        <name>ATP</name>
        <dbReference type="ChEBI" id="CHEBI:30616"/>
    </ligand>
</feature>
<comment type="function">
    <text evidence="1">Part of the ABC transporter complex CysAWTP involved in sulfate/thiosulfate import. Responsible for energy coupling to the transport system.</text>
</comment>
<comment type="catalytic activity">
    <reaction evidence="1">
        <text>sulfate(out) + ATP + H2O = sulfate(in) + ADP + phosphate + H(+)</text>
        <dbReference type="Rhea" id="RHEA:10192"/>
        <dbReference type="ChEBI" id="CHEBI:15377"/>
        <dbReference type="ChEBI" id="CHEBI:15378"/>
        <dbReference type="ChEBI" id="CHEBI:16189"/>
        <dbReference type="ChEBI" id="CHEBI:30616"/>
        <dbReference type="ChEBI" id="CHEBI:43474"/>
        <dbReference type="ChEBI" id="CHEBI:456216"/>
        <dbReference type="EC" id="7.3.2.3"/>
    </reaction>
</comment>
<comment type="catalytic activity">
    <reaction evidence="1">
        <text>thiosulfate(out) + ATP + H2O = thiosulfate(in) + ADP + phosphate + H(+)</text>
        <dbReference type="Rhea" id="RHEA:29871"/>
        <dbReference type="ChEBI" id="CHEBI:15377"/>
        <dbReference type="ChEBI" id="CHEBI:15378"/>
        <dbReference type="ChEBI" id="CHEBI:30616"/>
        <dbReference type="ChEBI" id="CHEBI:33542"/>
        <dbReference type="ChEBI" id="CHEBI:43474"/>
        <dbReference type="ChEBI" id="CHEBI:456216"/>
        <dbReference type="EC" id="7.3.2.3"/>
    </reaction>
</comment>
<comment type="subunit">
    <text evidence="1">The complex is composed of two ATP-binding proteins (CysA), two transmembrane proteins (CysT and CysW) and a solute-binding protein (CysP).</text>
</comment>
<comment type="subcellular location">
    <subcellularLocation>
        <location evidence="1">Cell inner membrane</location>
        <topology evidence="1">Peripheral membrane protein</topology>
    </subcellularLocation>
</comment>
<comment type="similarity">
    <text evidence="1">Belongs to the ABC transporter superfamily. Sulfate/tungstate importer (TC 3.A.1.6) family.</text>
</comment>
<dbReference type="EC" id="7.3.2.3" evidence="1"/>
<dbReference type="EMBL" id="BX572595">
    <property type="protein sequence ID" value="CAE26191.1"/>
    <property type="molecule type" value="Genomic_DNA"/>
</dbReference>
<dbReference type="RefSeq" id="WP_011156314.1">
    <property type="nucleotide sequence ID" value="NZ_CP116810.1"/>
</dbReference>
<dbReference type="SMR" id="Q6NBT1"/>
<dbReference type="STRING" id="258594.RPA0747"/>
<dbReference type="GeneID" id="66891762"/>
<dbReference type="eggNOG" id="COG1118">
    <property type="taxonomic scope" value="Bacteria"/>
</dbReference>
<dbReference type="HOGENOM" id="CLU_000604_1_1_5"/>
<dbReference type="PhylomeDB" id="Q6NBT1"/>
<dbReference type="GO" id="GO:0043190">
    <property type="term" value="C:ATP-binding cassette (ABC) transporter complex"/>
    <property type="evidence" value="ECO:0007669"/>
    <property type="project" value="InterPro"/>
</dbReference>
<dbReference type="GO" id="GO:0015419">
    <property type="term" value="F:ABC-type sulfate transporter activity"/>
    <property type="evidence" value="ECO:0007669"/>
    <property type="project" value="InterPro"/>
</dbReference>
<dbReference type="GO" id="GO:0102025">
    <property type="term" value="F:ABC-type thiosulfate transporter activity"/>
    <property type="evidence" value="ECO:0007669"/>
    <property type="project" value="RHEA"/>
</dbReference>
<dbReference type="GO" id="GO:0005524">
    <property type="term" value="F:ATP binding"/>
    <property type="evidence" value="ECO:0007669"/>
    <property type="project" value="UniProtKB-KW"/>
</dbReference>
<dbReference type="GO" id="GO:0016887">
    <property type="term" value="F:ATP hydrolysis activity"/>
    <property type="evidence" value="ECO:0007669"/>
    <property type="project" value="InterPro"/>
</dbReference>
<dbReference type="CDD" id="cd03296">
    <property type="entry name" value="ABC_CysA_sulfate_importer"/>
    <property type="match status" value="1"/>
</dbReference>
<dbReference type="FunFam" id="3.40.50.300:FF:000227">
    <property type="entry name" value="Sulfate/thiosulfate import ATP-binding protein CysA"/>
    <property type="match status" value="1"/>
</dbReference>
<dbReference type="Gene3D" id="3.40.50.300">
    <property type="entry name" value="P-loop containing nucleotide triphosphate hydrolases"/>
    <property type="match status" value="1"/>
</dbReference>
<dbReference type="InterPro" id="IPR003593">
    <property type="entry name" value="AAA+_ATPase"/>
</dbReference>
<dbReference type="InterPro" id="IPR050093">
    <property type="entry name" value="ABC_SmlMolc_Importer"/>
</dbReference>
<dbReference type="InterPro" id="IPR003439">
    <property type="entry name" value="ABC_transporter-like_ATP-bd"/>
</dbReference>
<dbReference type="InterPro" id="IPR017871">
    <property type="entry name" value="ABC_transporter-like_CS"/>
</dbReference>
<dbReference type="InterPro" id="IPR008995">
    <property type="entry name" value="Mo/tungstate-bd_C_term_dom"/>
</dbReference>
<dbReference type="InterPro" id="IPR027417">
    <property type="entry name" value="P-loop_NTPase"/>
</dbReference>
<dbReference type="InterPro" id="IPR005666">
    <property type="entry name" value="Sulph_transpt1"/>
</dbReference>
<dbReference type="InterPro" id="IPR024765">
    <property type="entry name" value="TOBE-like"/>
</dbReference>
<dbReference type="NCBIfam" id="TIGR00968">
    <property type="entry name" value="3a0106s01"/>
    <property type="match status" value="1"/>
</dbReference>
<dbReference type="PANTHER" id="PTHR42781">
    <property type="entry name" value="SPERMIDINE/PUTRESCINE IMPORT ATP-BINDING PROTEIN POTA"/>
    <property type="match status" value="1"/>
</dbReference>
<dbReference type="PANTHER" id="PTHR42781:SF4">
    <property type="entry name" value="SPERMIDINE_PUTRESCINE IMPORT ATP-BINDING PROTEIN POTA"/>
    <property type="match status" value="1"/>
</dbReference>
<dbReference type="Pfam" id="PF00005">
    <property type="entry name" value="ABC_tran"/>
    <property type="match status" value="1"/>
</dbReference>
<dbReference type="Pfam" id="PF12857">
    <property type="entry name" value="TOBE_3"/>
    <property type="match status" value="1"/>
</dbReference>
<dbReference type="SMART" id="SM00382">
    <property type="entry name" value="AAA"/>
    <property type="match status" value="1"/>
</dbReference>
<dbReference type="SUPFAM" id="SSF50331">
    <property type="entry name" value="MOP-like"/>
    <property type="match status" value="1"/>
</dbReference>
<dbReference type="SUPFAM" id="SSF52540">
    <property type="entry name" value="P-loop containing nucleoside triphosphate hydrolases"/>
    <property type="match status" value="1"/>
</dbReference>
<dbReference type="PROSITE" id="PS00211">
    <property type="entry name" value="ABC_TRANSPORTER_1"/>
    <property type="match status" value="1"/>
</dbReference>
<dbReference type="PROSITE" id="PS50893">
    <property type="entry name" value="ABC_TRANSPORTER_2"/>
    <property type="match status" value="1"/>
</dbReference>
<dbReference type="PROSITE" id="PS51237">
    <property type="entry name" value="CYSA"/>
    <property type="match status" value="1"/>
</dbReference>
<gene>
    <name evidence="1" type="primary">cysA</name>
    <name type="ordered locus">RPA0747</name>
</gene>
<reference key="1">
    <citation type="journal article" date="2004" name="Nat. Biotechnol.">
        <title>Complete genome sequence of the metabolically versatile photosynthetic bacterium Rhodopseudomonas palustris.</title>
        <authorList>
            <person name="Larimer F.W."/>
            <person name="Chain P."/>
            <person name="Hauser L."/>
            <person name="Lamerdin J.E."/>
            <person name="Malfatti S."/>
            <person name="Do L."/>
            <person name="Land M.L."/>
            <person name="Pelletier D.A."/>
            <person name="Beatty J.T."/>
            <person name="Lang A.S."/>
            <person name="Tabita F.R."/>
            <person name="Gibson J.L."/>
            <person name="Hanson T.E."/>
            <person name="Bobst C."/>
            <person name="Torres y Torres J.L."/>
            <person name="Peres C."/>
            <person name="Harrison F.H."/>
            <person name="Gibson J."/>
            <person name="Harwood C.S."/>
        </authorList>
    </citation>
    <scope>NUCLEOTIDE SEQUENCE [LARGE SCALE GENOMIC DNA]</scope>
    <source>
        <strain>ATCC BAA-98 / CGA009</strain>
    </source>
</reference>
<sequence length="348" mass="38521">MTIEVRNIVKEFGSFRALDNVDLRVETGELMALLGPSGSGKTTLLRIIAGLEWPDSGVVTIDGEDALAHGAAERHVGFVFQHYALFRHMNVFENVAFGLRVQPRKIRKSEAEIKKRVGDLLDLVQLGWLADRYPNQLSGGQRQRIALARALAIEPRILLLDEPFGALDAKVRKELRAWLRNLHEEIHVTSIFVTHDQEEALEVANRVVVMDKGRIEQIGSPGDVYERPASAFVHGFIGESIVLPVEVRDGRVRLGDRDLDLGAQDAAAGPSKLFVRRHDVTVGPSGSGVFEGAVKAVRAFGPMQRADIVLNDLGSDTLIEIDAPRDHSLKVGDRIGLQPQRYRIFADR</sequence>
<proteinExistence type="inferred from homology"/>